<dbReference type="EC" id="7.2.2.6" evidence="2"/>
<dbReference type="EMBL" id="D86934">
    <property type="protein sequence ID" value="BAA82181.1"/>
    <property type="molecule type" value="Genomic_DNA"/>
</dbReference>
<dbReference type="EMBL" id="BA000018">
    <property type="protein sequence ID" value="BAB41288.1"/>
    <property type="molecule type" value="Genomic_DNA"/>
</dbReference>
<dbReference type="PIR" id="E89766">
    <property type="entry name" value="E89766"/>
</dbReference>
<dbReference type="PIR" id="T44079">
    <property type="entry name" value="T44079"/>
</dbReference>
<dbReference type="RefSeq" id="WP_000852430.1">
    <property type="nucleotide sequence ID" value="NC_002745.2"/>
</dbReference>
<dbReference type="SMR" id="P0A008"/>
<dbReference type="EnsemblBacteria" id="BAB41288">
    <property type="protein sequence ID" value="BAB41288"/>
    <property type="gene ID" value="BAB41288"/>
</dbReference>
<dbReference type="KEGG" id="sau:SA0070"/>
<dbReference type="HOGENOM" id="CLU_025728_2_0_9"/>
<dbReference type="GO" id="GO:0045121">
    <property type="term" value="C:membrane raft"/>
    <property type="evidence" value="ECO:0007669"/>
    <property type="project" value="UniProtKB-SubCell"/>
</dbReference>
<dbReference type="GO" id="GO:0005886">
    <property type="term" value="C:plasma membrane"/>
    <property type="evidence" value="ECO:0007669"/>
    <property type="project" value="UniProtKB-SubCell"/>
</dbReference>
<dbReference type="GO" id="GO:0005524">
    <property type="term" value="F:ATP binding"/>
    <property type="evidence" value="ECO:0007669"/>
    <property type="project" value="UniProtKB-UniRule"/>
</dbReference>
<dbReference type="GO" id="GO:0016887">
    <property type="term" value="F:ATP hydrolysis activity"/>
    <property type="evidence" value="ECO:0007669"/>
    <property type="project" value="InterPro"/>
</dbReference>
<dbReference type="GO" id="GO:0000287">
    <property type="term" value="F:magnesium ion binding"/>
    <property type="evidence" value="ECO:0007669"/>
    <property type="project" value="UniProtKB-UniRule"/>
</dbReference>
<dbReference type="GO" id="GO:0008556">
    <property type="term" value="F:P-type potassium transmembrane transporter activity"/>
    <property type="evidence" value="ECO:0007669"/>
    <property type="project" value="UniProtKB-UniRule"/>
</dbReference>
<dbReference type="FunFam" id="2.70.150.10:FF:000010">
    <property type="entry name" value="Potassium-transporting ATPase ATP-binding subunit"/>
    <property type="match status" value="1"/>
</dbReference>
<dbReference type="FunFam" id="3.40.1110.10:FF:000007">
    <property type="entry name" value="Potassium-transporting ATPase ATP-binding subunit"/>
    <property type="match status" value="1"/>
</dbReference>
<dbReference type="Gene3D" id="3.40.1110.10">
    <property type="entry name" value="Calcium-transporting ATPase, cytoplasmic domain N"/>
    <property type="match status" value="1"/>
</dbReference>
<dbReference type="Gene3D" id="2.70.150.10">
    <property type="entry name" value="Calcium-transporting ATPase, cytoplasmic transduction domain A"/>
    <property type="match status" value="1"/>
</dbReference>
<dbReference type="Gene3D" id="3.40.50.1000">
    <property type="entry name" value="HAD superfamily/HAD-like"/>
    <property type="match status" value="1"/>
</dbReference>
<dbReference type="HAMAP" id="MF_00285">
    <property type="entry name" value="KdpB"/>
    <property type="match status" value="1"/>
</dbReference>
<dbReference type="InterPro" id="IPR023299">
    <property type="entry name" value="ATPase_P-typ_cyto_dom_N"/>
</dbReference>
<dbReference type="InterPro" id="IPR018303">
    <property type="entry name" value="ATPase_P-typ_P_site"/>
</dbReference>
<dbReference type="InterPro" id="IPR023298">
    <property type="entry name" value="ATPase_P-typ_TM_dom_sf"/>
</dbReference>
<dbReference type="InterPro" id="IPR008250">
    <property type="entry name" value="ATPase_P-typ_transduc_dom_A_sf"/>
</dbReference>
<dbReference type="InterPro" id="IPR036412">
    <property type="entry name" value="HAD-like_sf"/>
</dbReference>
<dbReference type="InterPro" id="IPR023214">
    <property type="entry name" value="HAD_sf"/>
</dbReference>
<dbReference type="InterPro" id="IPR006391">
    <property type="entry name" value="P-type_ATPase_bsu_IA"/>
</dbReference>
<dbReference type="InterPro" id="IPR001757">
    <property type="entry name" value="P_typ_ATPase"/>
</dbReference>
<dbReference type="InterPro" id="IPR044492">
    <property type="entry name" value="P_typ_ATPase_HD_dom"/>
</dbReference>
<dbReference type="NCBIfam" id="TIGR01494">
    <property type="entry name" value="ATPase_P-type"/>
    <property type="match status" value="1"/>
</dbReference>
<dbReference type="NCBIfam" id="TIGR01497">
    <property type="entry name" value="kdpB"/>
    <property type="match status" value="1"/>
</dbReference>
<dbReference type="NCBIfam" id="NF010609">
    <property type="entry name" value="PRK14010.1"/>
    <property type="match status" value="1"/>
</dbReference>
<dbReference type="PANTHER" id="PTHR43743">
    <property type="entry name" value="POTASSIUM-TRANSPORTING ATPASE ATP-BINDING SUBUNIT"/>
    <property type="match status" value="1"/>
</dbReference>
<dbReference type="PANTHER" id="PTHR43743:SF1">
    <property type="entry name" value="POTASSIUM-TRANSPORTING ATPASE ATP-BINDING SUBUNIT"/>
    <property type="match status" value="1"/>
</dbReference>
<dbReference type="Pfam" id="PF00122">
    <property type="entry name" value="E1-E2_ATPase"/>
    <property type="match status" value="1"/>
</dbReference>
<dbReference type="Pfam" id="PF00702">
    <property type="entry name" value="Hydrolase"/>
    <property type="match status" value="1"/>
</dbReference>
<dbReference type="PRINTS" id="PR00119">
    <property type="entry name" value="CATATPASE"/>
</dbReference>
<dbReference type="SFLD" id="SFLDG00002">
    <property type="entry name" value="C1.7:_P-type_atpase_like"/>
    <property type="match status" value="1"/>
</dbReference>
<dbReference type="SFLD" id="SFLDF00027">
    <property type="entry name" value="p-type_atpase"/>
    <property type="match status" value="1"/>
</dbReference>
<dbReference type="SUPFAM" id="SSF81653">
    <property type="entry name" value="Calcium ATPase, transduction domain A"/>
    <property type="match status" value="1"/>
</dbReference>
<dbReference type="SUPFAM" id="SSF81665">
    <property type="entry name" value="Calcium ATPase, transmembrane domain M"/>
    <property type="match status" value="1"/>
</dbReference>
<dbReference type="SUPFAM" id="SSF56784">
    <property type="entry name" value="HAD-like"/>
    <property type="match status" value="1"/>
</dbReference>
<dbReference type="PROSITE" id="PS00154">
    <property type="entry name" value="ATPASE_E1_E2"/>
    <property type="match status" value="1"/>
</dbReference>
<comment type="function">
    <text evidence="2">Part of the high-affinity ATP-driven potassium transport (or Kdp) system, which catalyzes the hydrolysis of ATP coupled with the electrogenic transport of potassium into the cytoplasm. This subunit is responsible for energy coupling to the transport system and for the release of the potassium ions to the cytoplasm.</text>
</comment>
<comment type="catalytic activity">
    <reaction evidence="2">
        <text>K(+)(out) + ATP + H2O = K(+)(in) + ADP + phosphate + H(+)</text>
        <dbReference type="Rhea" id="RHEA:16777"/>
        <dbReference type="ChEBI" id="CHEBI:15377"/>
        <dbReference type="ChEBI" id="CHEBI:15378"/>
        <dbReference type="ChEBI" id="CHEBI:29103"/>
        <dbReference type="ChEBI" id="CHEBI:30616"/>
        <dbReference type="ChEBI" id="CHEBI:43474"/>
        <dbReference type="ChEBI" id="CHEBI:456216"/>
        <dbReference type="EC" id="7.2.2.6"/>
    </reaction>
    <physiologicalReaction direction="left-to-right" evidence="2">
        <dbReference type="Rhea" id="RHEA:16778"/>
    </physiologicalReaction>
</comment>
<comment type="subunit">
    <text evidence="2">The system is composed of three essential subunits: KdpA, KdpB and KdpC.</text>
</comment>
<comment type="subcellular location">
    <subcellularLocation>
        <location evidence="2 3">Cell membrane</location>
        <topology evidence="2">Multi-pass membrane protein</topology>
    </subcellularLocation>
    <subcellularLocation>
        <location evidence="3">Membrane raft</location>
        <topology evidence="1">Multi-pass membrane protein</topology>
    </subcellularLocation>
    <text evidence="3">Present in detergent-resistant membrane (DRM) fractions that may be equivalent to eukaryotic membrane rafts; these rafts include proteins involved in signaling, molecule trafficking and protein secretion.</text>
</comment>
<comment type="similarity">
    <text evidence="2">Belongs to the cation transport ATPase (P-type) (TC 3.A.3) family. Type IA subfamily.</text>
</comment>
<name>KDPB1_STAAN</name>
<accession>P0A008</accession>
<accession>Q9XBA9</accession>
<feature type="chain" id="PRO_0000046137" description="Potassium-transporting ATPase ATP-binding subunit 1">
    <location>
        <begin position="1"/>
        <end position="673"/>
    </location>
</feature>
<feature type="transmembrane region" description="Helical" evidence="2">
    <location>
        <begin position="34"/>
        <end position="54"/>
    </location>
</feature>
<feature type="transmembrane region" description="Helical" evidence="2">
    <location>
        <begin position="65"/>
        <end position="85"/>
    </location>
</feature>
<feature type="transmembrane region" description="Helical" evidence="2">
    <location>
        <begin position="216"/>
        <end position="236"/>
    </location>
</feature>
<feature type="transmembrane region" description="Helical" evidence="2">
    <location>
        <begin position="253"/>
        <end position="273"/>
    </location>
</feature>
<feature type="transmembrane region" description="Helical" evidence="2">
    <location>
        <begin position="581"/>
        <end position="601"/>
    </location>
</feature>
<feature type="transmembrane region" description="Helical" evidence="2">
    <location>
        <begin position="609"/>
        <end position="629"/>
    </location>
</feature>
<feature type="transmembrane region" description="Helical" evidence="2">
    <location>
        <begin position="649"/>
        <end position="669"/>
    </location>
</feature>
<feature type="active site" description="4-aspartylphosphate intermediate" evidence="2">
    <location>
        <position position="304"/>
    </location>
</feature>
<feature type="binding site" evidence="2">
    <location>
        <position position="341"/>
    </location>
    <ligand>
        <name>ATP</name>
        <dbReference type="ChEBI" id="CHEBI:30616"/>
    </ligand>
</feature>
<feature type="binding site" evidence="2">
    <location>
        <position position="345"/>
    </location>
    <ligand>
        <name>ATP</name>
        <dbReference type="ChEBI" id="CHEBI:30616"/>
    </ligand>
</feature>
<feature type="binding site" evidence="2">
    <location>
        <begin position="370"/>
        <end position="377"/>
    </location>
    <ligand>
        <name>ATP</name>
        <dbReference type="ChEBI" id="CHEBI:30616"/>
    </ligand>
</feature>
<feature type="binding site" evidence="2">
    <location>
        <position position="388"/>
    </location>
    <ligand>
        <name>ATP</name>
        <dbReference type="ChEBI" id="CHEBI:30616"/>
    </ligand>
</feature>
<feature type="binding site" evidence="2">
    <location>
        <position position="511"/>
    </location>
    <ligand>
        <name>Mg(2+)</name>
        <dbReference type="ChEBI" id="CHEBI:18420"/>
    </ligand>
</feature>
<feature type="binding site" evidence="2">
    <location>
        <position position="515"/>
    </location>
    <ligand>
        <name>Mg(2+)</name>
        <dbReference type="ChEBI" id="CHEBI:18420"/>
    </ligand>
</feature>
<protein>
    <recommendedName>
        <fullName evidence="2">Potassium-transporting ATPase ATP-binding subunit 1</fullName>
        <ecNumber evidence="2">7.2.2.6</ecNumber>
    </recommendedName>
    <alternativeName>
        <fullName evidence="2">ATP phosphohydrolase [potassium-transporting] B chain 1</fullName>
    </alternativeName>
    <alternativeName>
        <fullName evidence="2">Potassium-binding and translocating subunit B 1</fullName>
    </alternativeName>
    <alternativeName>
        <fullName evidence="2">Potassium-translocating ATPase B chain 1</fullName>
    </alternativeName>
</protein>
<sequence>MAETTKIFESHLVKQALKDSVLKLYPVYMIKNPIMFVVEVGMLLALGLTIYPDLFHQESVSRLYVFSIFIILLLTLVFANFSEALAEGRGKAQANALRQTQTEMKARRIKQDGSYEMIDASDLKKGHIVRVATGEQIPNDGKVIKGLATVDESAITGESAPVIKESGGDFDNVIGGTSVASDWLEVEITSEPGHSFLDKMIGLVEGATRKKTPNEIALFTLLMTLTIIFLVVILTMYPLAKFLNFNLSIAMLIALAVCLIPTTIGGLLSAIGIAGMDRVTQFNILAKSGRSVETCGDVNVLILDKTGTITYGNRMADAFIPVKSSSFERLVKAAYESSIADDTPEGRSIVKLAYKQHIDLPQEVGEYIPFTAETRMSGVKFTTREVYKGAPNSMVKRVKEAGGHIPVDLDALVKGVSKKGGTPLVVLEDNEILGVIYLKDVIKDGLVERFRELREMGIETVMCTGDNELTAATIAKEAGVDRFVAECKPEDKINVIREEQAKGHIVAMTGDGTNDAPALAEANVGLAMNSGTMSAKEAANLIDLDSNPTKLMEVVLIGKQLLMTRGSLTTFSIANDIAKYFAILPAMFMAAMPAMNHLNIMHLHSPESAVLSALIFNALIIVLLIPIAMKGVKFKGASTQTILMKNMLVYGLGGMIVPFIGIKLIDLIIQLFV</sequence>
<keyword id="KW-0067">ATP-binding</keyword>
<keyword id="KW-1003">Cell membrane</keyword>
<keyword id="KW-0406">Ion transport</keyword>
<keyword id="KW-0460">Magnesium</keyword>
<keyword id="KW-0472">Membrane</keyword>
<keyword id="KW-0479">Metal-binding</keyword>
<keyword id="KW-0547">Nucleotide-binding</keyword>
<keyword id="KW-0597">Phosphoprotein</keyword>
<keyword id="KW-0630">Potassium</keyword>
<keyword id="KW-0633">Potassium transport</keyword>
<keyword id="KW-1278">Translocase</keyword>
<keyword id="KW-0812">Transmembrane</keyword>
<keyword id="KW-1133">Transmembrane helix</keyword>
<keyword id="KW-0813">Transport</keyword>
<organism>
    <name type="scientific">Staphylococcus aureus (strain N315)</name>
    <dbReference type="NCBI Taxonomy" id="158879"/>
    <lineage>
        <taxon>Bacteria</taxon>
        <taxon>Bacillati</taxon>
        <taxon>Bacillota</taxon>
        <taxon>Bacilli</taxon>
        <taxon>Bacillales</taxon>
        <taxon>Staphylococcaceae</taxon>
        <taxon>Staphylococcus</taxon>
    </lineage>
</organism>
<reference key="1">
    <citation type="journal article" date="1999" name="Antimicrob. Agents Chemother.">
        <title>Cloning and nucleotide sequence determination of the entire mec DNA of pre-methicillin-resistant Staphylococcus aureus N315.</title>
        <authorList>
            <person name="Ito T."/>
            <person name="Katayama Y."/>
            <person name="Hiramatsu K."/>
        </authorList>
    </citation>
    <scope>NUCLEOTIDE SEQUENCE [GENOMIC DNA]</scope>
</reference>
<reference key="2">
    <citation type="journal article" date="2001" name="Lancet">
        <title>Whole genome sequencing of meticillin-resistant Staphylococcus aureus.</title>
        <authorList>
            <person name="Kuroda M."/>
            <person name="Ohta T."/>
            <person name="Uchiyama I."/>
            <person name="Baba T."/>
            <person name="Yuzawa H."/>
            <person name="Kobayashi I."/>
            <person name="Cui L."/>
            <person name="Oguchi A."/>
            <person name="Aoki K."/>
            <person name="Nagai Y."/>
            <person name="Lian J.-Q."/>
            <person name="Ito T."/>
            <person name="Kanamori M."/>
            <person name="Matsumaru H."/>
            <person name="Maruyama A."/>
            <person name="Murakami H."/>
            <person name="Hosoyama A."/>
            <person name="Mizutani-Ui Y."/>
            <person name="Takahashi N.K."/>
            <person name="Sawano T."/>
            <person name="Inoue R."/>
            <person name="Kaito C."/>
            <person name="Sekimizu K."/>
            <person name="Hirakawa H."/>
            <person name="Kuhara S."/>
            <person name="Goto S."/>
            <person name="Yabuzaki J."/>
            <person name="Kanehisa M."/>
            <person name="Yamashita A."/>
            <person name="Oshima K."/>
            <person name="Furuya K."/>
            <person name="Yoshino C."/>
            <person name="Shiba T."/>
            <person name="Hattori M."/>
            <person name="Ogasawara N."/>
            <person name="Hayashi H."/>
            <person name="Hiramatsu K."/>
        </authorList>
    </citation>
    <scope>NUCLEOTIDE SEQUENCE [LARGE SCALE GENOMIC DNA]</scope>
    <source>
        <strain>N315</strain>
    </source>
</reference>
<reference key="3">
    <citation type="journal article" date="2010" name="Genes Dev.">
        <title>Functional microdomains in bacterial membranes.</title>
        <authorList>
            <person name="Lopez D."/>
            <person name="Kolter R."/>
        </authorList>
    </citation>
    <scope>IDENTIFICATION BY MASS SPECTROMETRY</scope>
    <scope>SUBCELLULAR LOCATION</scope>
</reference>
<evidence type="ECO:0000255" key="1"/>
<evidence type="ECO:0000255" key="2">
    <source>
        <dbReference type="HAMAP-Rule" id="MF_00285"/>
    </source>
</evidence>
<evidence type="ECO:0000269" key="3">
    <source>
    </source>
</evidence>
<gene>
    <name evidence="2" type="primary">kdpB1</name>
    <name type="ordered locus">SA0070</name>
</gene>
<proteinExistence type="evidence at protein level"/>